<gene>
    <name evidence="1" type="primary">xylA</name>
    <name type="ordered locus">YpsIP31758_4102</name>
</gene>
<proteinExistence type="inferred from homology"/>
<evidence type="ECO:0000255" key="1">
    <source>
        <dbReference type="HAMAP-Rule" id="MF_00455"/>
    </source>
</evidence>
<comment type="catalytic activity">
    <reaction evidence="1">
        <text>alpha-D-xylose = alpha-D-xylulofuranose</text>
        <dbReference type="Rhea" id="RHEA:22816"/>
        <dbReference type="ChEBI" id="CHEBI:28518"/>
        <dbReference type="ChEBI" id="CHEBI:188998"/>
        <dbReference type="EC" id="5.3.1.5"/>
    </reaction>
</comment>
<comment type="cofactor">
    <cofactor evidence="1">
        <name>Mg(2+)</name>
        <dbReference type="ChEBI" id="CHEBI:18420"/>
    </cofactor>
    <text evidence="1">Binds 2 magnesium ions per subunit.</text>
</comment>
<comment type="subunit">
    <text evidence="1">Homotetramer.</text>
</comment>
<comment type="subcellular location">
    <subcellularLocation>
        <location evidence="1">Cytoplasm</location>
    </subcellularLocation>
</comment>
<comment type="similarity">
    <text evidence="1">Belongs to the xylose isomerase family.</text>
</comment>
<dbReference type="EC" id="5.3.1.5" evidence="1"/>
<dbReference type="EMBL" id="CP000720">
    <property type="protein sequence ID" value="ABS49160.1"/>
    <property type="molecule type" value="Genomic_DNA"/>
</dbReference>
<dbReference type="RefSeq" id="WP_002209593.1">
    <property type="nucleotide sequence ID" value="NC_009708.1"/>
</dbReference>
<dbReference type="SMR" id="A7FP68"/>
<dbReference type="GeneID" id="57974675"/>
<dbReference type="KEGG" id="ypi:YpsIP31758_4102"/>
<dbReference type="HOGENOM" id="CLU_037261_1_0_6"/>
<dbReference type="Proteomes" id="UP000002412">
    <property type="component" value="Chromosome"/>
</dbReference>
<dbReference type="GO" id="GO:0005737">
    <property type="term" value="C:cytoplasm"/>
    <property type="evidence" value="ECO:0007669"/>
    <property type="project" value="UniProtKB-SubCell"/>
</dbReference>
<dbReference type="GO" id="GO:0000287">
    <property type="term" value="F:magnesium ion binding"/>
    <property type="evidence" value="ECO:0007669"/>
    <property type="project" value="UniProtKB-UniRule"/>
</dbReference>
<dbReference type="GO" id="GO:0009045">
    <property type="term" value="F:xylose isomerase activity"/>
    <property type="evidence" value="ECO:0007669"/>
    <property type="project" value="UniProtKB-UniRule"/>
</dbReference>
<dbReference type="GO" id="GO:0042732">
    <property type="term" value="P:D-xylose metabolic process"/>
    <property type="evidence" value="ECO:0007669"/>
    <property type="project" value="UniProtKB-UniRule"/>
</dbReference>
<dbReference type="FunFam" id="3.20.20.150:FF:000002">
    <property type="entry name" value="Xylose isomerase"/>
    <property type="match status" value="1"/>
</dbReference>
<dbReference type="Gene3D" id="3.20.20.150">
    <property type="entry name" value="Divalent-metal-dependent TIM barrel enzymes"/>
    <property type="match status" value="1"/>
</dbReference>
<dbReference type="HAMAP" id="MF_00455">
    <property type="entry name" value="Xylose_isom_A"/>
    <property type="match status" value="1"/>
</dbReference>
<dbReference type="InterPro" id="IPR036237">
    <property type="entry name" value="Xyl_isomerase-like_sf"/>
</dbReference>
<dbReference type="InterPro" id="IPR013452">
    <property type="entry name" value="Xylose_isom_bac"/>
</dbReference>
<dbReference type="InterPro" id="IPR001998">
    <property type="entry name" value="Xylose_isomerase"/>
</dbReference>
<dbReference type="NCBIfam" id="NF003998">
    <property type="entry name" value="PRK05474.1"/>
    <property type="match status" value="1"/>
</dbReference>
<dbReference type="NCBIfam" id="TIGR02630">
    <property type="entry name" value="xylose_isom_A"/>
    <property type="match status" value="1"/>
</dbReference>
<dbReference type="PANTHER" id="PTHR48408">
    <property type="match status" value="1"/>
</dbReference>
<dbReference type="PANTHER" id="PTHR48408:SF1">
    <property type="entry name" value="XYLOSE ISOMERASE"/>
    <property type="match status" value="1"/>
</dbReference>
<dbReference type="PRINTS" id="PR00688">
    <property type="entry name" value="XYLOSISMRASE"/>
</dbReference>
<dbReference type="SUPFAM" id="SSF51658">
    <property type="entry name" value="Xylose isomerase-like"/>
    <property type="match status" value="1"/>
</dbReference>
<dbReference type="PROSITE" id="PS51415">
    <property type="entry name" value="XYLOSE_ISOMERASE"/>
    <property type="match status" value="1"/>
</dbReference>
<feature type="chain" id="PRO_1000060323" description="Xylose isomerase">
    <location>
        <begin position="1"/>
        <end position="439"/>
    </location>
</feature>
<feature type="active site" evidence="1">
    <location>
        <position position="101"/>
    </location>
</feature>
<feature type="active site" evidence="1">
    <location>
        <position position="104"/>
    </location>
</feature>
<feature type="binding site" evidence="1">
    <location>
        <position position="232"/>
    </location>
    <ligand>
        <name>Mg(2+)</name>
        <dbReference type="ChEBI" id="CHEBI:18420"/>
        <label>1</label>
    </ligand>
</feature>
<feature type="binding site" evidence="1">
    <location>
        <position position="268"/>
    </location>
    <ligand>
        <name>Mg(2+)</name>
        <dbReference type="ChEBI" id="CHEBI:18420"/>
        <label>1</label>
    </ligand>
</feature>
<feature type="binding site" evidence="1">
    <location>
        <position position="268"/>
    </location>
    <ligand>
        <name>Mg(2+)</name>
        <dbReference type="ChEBI" id="CHEBI:18420"/>
        <label>2</label>
    </ligand>
</feature>
<feature type="binding site" evidence="1">
    <location>
        <position position="271"/>
    </location>
    <ligand>
        <name>Mg(2+)</name>
        <dbReference type="ChEBI" id="CHEBI:18420"/>
        <label>2</label>
    </ligand>
</feature>
<feature type="binding site" evidence="1">
    <location>
        <position position="296"/>
    </location>
    <ligand>
        <name>Mg(2+)</name>
        <dbReference type="ChEBI" id="CHEBI:18420"/>
        <label>1</label>
    </ligand>
</feature>
<feature type="binding site" evidence="1">
    <location>
        <position position="307"/>
    </location>
    <ligand>
        <name>Mg(2+)</name>
        <dbReference type="ChEBI" id="CHEBI:18420"/>
        <label>2</label>
    </ligand>
</feature>
<feature type="binding site" evidence="1">
    <location>
        <position position="309"/>
    </location>
    <ligand>
        <name>Mg(2+)</name>
        <dbReference type="ChEBI" id="CHEBI:18420"/>
        <label>2</label>
    </ligand>
</feature>
<feature type="binding site" evidence="1">
    <location>
        <position position="339"/>
    </location>
    <ligand>
        <name>Mg(2+)</name>
        <dbReference type="ChEBI" id="CHEBI:18420"/>
        <label>1</label>
    </ligand>
</feature>
<reference key="1">
    <citation type="journal article" date="2007" name="PLoS Genet.">
        <title>The complete genome sequence of Yersinia pseudotuberculosis IP31758, the causative agent of Far East scarlet-like fever.</title>
        <authorList>
            <person name="Eppinger M."/>
            <person name="Rosovitz M.J."/>
            <person name="Fricke W.F."/>
            <person name="Rasko D.A."/>
            <person name="Kokorina G."/>
            <person name="Fayolle C."/>
            <person name="Lindler L.E."/>
            <person name="Carniel E."/>
            <person name="Ravel J."/>
        </authorList>
    </citation>
    <scope>NUCLEOTIDE SEQUENCE [LARGE SCALE GENOMIC DNA]</scope>
    <source>
        <strain>IP 31758</strain>
    </source>
</reference>
<accession>A7FP68</accession>
<organism>
    <name type="scientific">Yersinia pseudotuberculosis serotype O:1b (strain IP 31758)</name>
    <dbReference type="NCBI Taxonomy" id="349747"/>
    <lineage>
        <taxon>Bacteria</taxon>
        <taxon>Pseudomonadati</taxon>
        <taxon>Pseudomonadota</taxon>
        <taxon>Gammaproteobacteria</taxon>
        <taxon>Enterobacterales</taxon>
        <taxon>Yersiniaceae</taxon>
        <taxon>Yersinia</taxon>
    </lineage>
</organism>
<keyword id="KW-0119">Carbohydrate metabolism</keyword>
<keyword id="KW-0963">Cytoplasm</keyword>
<keyword id="KW-0413">Isomerase</keyword>
<keyword id="KW-0460">Magnesium</keyword>
<keyword id="KW-0479">Metal-binding</keyword>
<keyword id="KW-0859">Xylose metabolism</keyword>
<protein>
    <recommendedName>
        <fullName evidence="1">Xylose isomerase</fullName>
        <ecNumber evidence="1">5.3.1.5</ecNumber>
    </recommendedName>
</protein>
<name>XYLA_YERP3</name>
<sequence length="439" mass="49550">MQSYFNELEQVRYEGSQSTNPLAFHHYNPDEMILGKRMADHLRFAACYWHTFCWGGADMFGANAFDRPWQQPGDALALAKRKAEVAFEFFHKLNVPYYCFHDVDVSPEGASLQEYLNNFAVMTDVLAEKQAASGVKLLWGTANCFTHPRYGAGAATNPDPEVFSWAATQVFTAMNATRQLGGENYVLWGGREGYETLLNTDLRQEREQIGRFMQMVVEHKHKTGFQGTLLIEPKPQEPTKHQYDYDVATVYGFLKQFGLEKEIKVNIEANHATLAGHSFHHEIASAIALGIFGSVDANRGDPQLGWDTDQFPNSVEENTLVMFEILKAGGFTTGGLNFDAKVRRQSTDKYDLFYGHIGAMDTMALALKFAAKMIEDGQLDQIVAKRYAGWNSELGQQILQGKMSLEELSRYASQHNLNPQHQSGHQELLENKVNRYLFG</sequence>